<gene>
    <name type="ordered locus">NGR_a02290</name>
    <name type="ORF">y4nM</name>
</gene>
<evidence type="ECO:0000255" key="1"/>
<evidence type="ECO:0000305" key="2"/>
<dbReference type="EMBL" id="U00090">
    <property type="protein sequence ID" value="AAB91792.1"/>
    <property type="molecule type" value="Genomic_DNA"/>
</dbReference>
<dbReference type="RefSeq" id="NP_443996.1">
    <property type="nucleotide sequence ID" value="NC_000914.2"/>
</dbReference>
<dbReference type="SMR" id="P55585"/>
<dbReference type="KEGG" id="rhi:NGR_a02290"/>
<dbReference type="PATRIC" id="fig|394.7.peg.242"/>
<dbReference type="eggNOG" id="COG0382">
    <property type="taxonomic scope" value="Bacteria"/>
</dbReference>
<dbReference type="eggNOG" id="COG0546">
    <property type="taxonomic scope" value="Bacteria"/>
</dbReference>
<dbReference type="HOGENOM" id="CLU_029423_2_0_5"/>
<dbReference type="OrthoDB" id="9803632at2"/>
<dbReference type="Proteomes" id="UP000001054">
    <property type="component" value="Plasmid pNGR234a"/>
</dbReference>
<dbReference type="GO" id="GO:0005886">
    <property type="term" value="C:plasma membrane"/>
    <property type="evidence" value="ECO:0007669"/>
    <property type="project" value="UniProtKB-SubCell"/>
</dbReference>
<dbReference type="GO" id="GO:0016765">
    <property type="term" value="F:transferase activity, transferring alkyl or aryl (other than methyl) groups"/>
    <property type="evidence" value="ECO:0007669"/>
    <property type="project" value="InterPro"/>
</dbReference>
<dbReference type="GO" id="GO:0009247">
    <property type="term" value="P:glycolipid biosynthetic process"/>
    <property type="evidence" value="ECO:0007669"/>
    <property type="project" value="TreeGrafter"/>
</dbReference>
<dbReference type="CDD" id="cd13963">
    <property type="entry name" value="PT_UbiA_2"/>
    <property type="match status" value="1"/>
</dbReference>
<dbReference type="Gene3D" id="3.40.50.1000">
    <property type="entry name" value="HAD superfamily/HAD-like"/>
    <property type="match status" value="1"/>
</dbReference>
<dbReference type="Gene3D" id="1.10.357.140">
    <property type="entry name" value="UbiA prenyltransferase"/>
    <property type="match status" value="1"/>
</dbReference>
<dbReference type="InterPro" id="IPR036412">
    <property type="entry name" value="HAD-like_sf"/>
</dbReference>
<dbReference type="InterPro" id="IPR023214">
    <property type="entry name" value="HAD_sf"/>
</dbReference>
<dbReference type="InterPro" id="IPR039653">
    <property type="entry name" value="Prenyltransferase"/>
</dbReference>
<dbReference type="InterPro" id="IPR000537">
    <property type="entry name" value="UbiA_prenyltransferase"/>
</dbReference>
<dbReference type="InterPro" id="IPR044878">
    <property type="entry name" value="UbiA_sf"/>
</dbReference>
<dbReference type="NCBIfam" id="NF006088">
    <property type="entry name" value="PRK08238.1"/>
    <property type="match status" value="1"/>
</dbReference>
<dbReference type="PANTHER" id="PTHR11048:SF5">
    <property type="entry name" value="DECAPRENYL-PHOSPHATE PHOSPHORIBOSYLTRANSFERASE"/>
    <property type="match status" value="1"/>
</dbReference>
<dbReference type="PANTHER" id="PTHR11048">
    <property type="entry name" value="PRENYLTRANSFERASES"/>
    <property type="match status" value="1"/>
</dbReference>
<dbReference type="Pfam" id="PF12710">
    <property type="entry name" value="HAD"/>
    <property type="match status" value="1"/>
</dbReference>
<dbReference type="Pfam" id="PF01040">
    <property type="entry name" value="UbiA"/>
    <property type="match status" value="1"/>
</dbReference>
<dbReference type="SUPFAM" id="SSF56784">
    <property type="entry name" value="HAD-like"/>
    <property type="match status" value="1"/>
</dbReference>
<organism>
    <name type="scientific">Sinorhizobium fredii (strain NBRC 101917 / NGR234)</name>
    <dbReference type="NCBI Taxonomy" id="394"/>
    <lineage>
        <taxon>Bacteria</taxon>
        <taxon>Pseudomonadati</taxon>
        <taxon>Pseudomonadota</taxon>
        <taxon>Alphaproteobacteria</taxon>
        <taxon>Hyphomicrobiales</taxon>
        <taxon>Rhizobiaceae</taxon>
        <taxon>Sinorhizobium/Ensifer group</taxon>
        <taxon>Sinorhizobium</taxon>
    </lineage>
</organism>
<keyword id="KW-1003">Cell membrane</keyword>
<keyword id="KW-0472">Membrane</keyword>
<keyword id="KW-0536">Nodulation</keyword>
<keyword id="KW-0614">Plasmid</keyword>
<keyword id="KW-1185">Reference proteome</keyword>
<keyword id="KW-0812">Transmembrane</keyword>
<keyword id="KW-1133">Transmembrane helix</keyword>
<keyword id="KW-0813">Transport</keyword>
<feature type="chain" id="PRO_0000200921" description="Uncharacterized protein y4nM">
    <location>
        <begin position="1"/>
        <end position="516"/>
    </location>
</feature>
<feature type="transmembrane region" description="Helical" evidence="1">
    <location>
        <begin position="183"/>
        <end position="203"/>
    </location>
</feature>
<feature type="transmembrane region" description="Helical" evidence="1">
    <location>
        <begin position="261"/>
        <end position="281"/>
    </location>
</feature>
<feature type="transmembrane region" description="Helical" evidence="1">
    <location>
        <begin position="308"/>
        <end position="328"/>
    </location>
</feature>
<feature type="transmembrane region" description="Helical" evidence="1">
    <location>
        <begin position="329"/>
        <end position="349"/>
    </location>
</feature>
<feature type="transmembrane region" description="Helical" evidence="1">
    <location>
        <begin position="356"/>
        <end position="376"/>
    </location>
</feature>
<feature type="transmembrane region" description="Helical" evidence="1">
    <location>
        <begin position="379"/>
        <end position="399"/>
    </location>
</feature>
<feature type="transmembrane region" description="Helical" evidence="1">
    <location>
        <begin position="430"/>
        <end position="450"/>
    </location>
</feature>
<feature type="transmembrane region" description="Helical" evidence="1">
    <location>
        <begin position="461"/>
        <end position="481"/>
    </location>
</feature>
<feature type="transmembrane region" description="Helical" evidence="1">
    <location>
        <begin position="492"/>
        <end position="512"/>
    </location>
</feature>
<sequence>MPGSPPPENAPAVLWTCFGASGWRMLLMKQRRNEMKVLDLDCFDRKLPLICDLDGTLIKSDSLHENLFDAFFHSPQQLLRTIPNWFKGRPALKEALAKVRSVEPQALPYREQMLDLIRRARSAGRETYLVTAADQSIADDIISHLGGFDGAKGSSGSLNLKSRRKLQWLQESFPEGFIYAGDSAADLPIWEAASGAVLVGDGVKFESKLREAGVEVRTLSPEKSHPVKDWLSELRIHQWSKNVLIFVPLFLGRIADDFHAVLKTTFGFLAFGLIVSATYIINDLADLEADRAHATKRFRAIAAGRISVMNGFLACLVMLATGIGTALLLDHQFALVASVYLALTLAYSFRLKRVALLDVTVIGALFTLRIVMGQVLNGLAFSPWLFSFSVMFFISLALAKRHVEAMRACSNRKDTIEGRGYLPGDWPLTLGHGLASASASIVIMLLFLALEPRVTHLYHNPAWLYVAPLGVSIWLQRIWLLSHRMELHDDPIVFALNDKTSWFIGALIASAFVMAM</sequence>
<proteinExistence type="predicted"/>
<comment type="function">
    <text>Possible permease/transporter.</text>
</comment>
<comment type="subcellular location">
    <subcellularLocation>
        <location evidence="2">Cell membrane</location>
        <topology evidence="2">Multi-pass membrane protein</topology>
    </subcellularLocation>
</comment>
<name>Y4NM_SINFN</name>
<geneLocation type="plasmid">
    <name>sym pNGR234a</name>
</geneLocation>
<reference key="1">
    <citation type="journal article" date="1997" name="Nature">
        <title>Molecular basis of symbiosis between Rhizobium and legumes.</title>
        <authorList>
            <person name="Freiberg C.A."/>
            <person name="Fellay R."/>
            <person name="Bairoch A."/>
            <person name="Broughton W.J."/>
            <person name="Rosenthal A."/>
            <person name="Perret X."/>
        </authorList>
    </citation>
    <scope>NUCLEOTIDE SEQUENCE [LARGE SCALE GENOMIC DNA]</scope>
    <source>
        <strain>NBRC 101917 / NGR234</strain>
    </source>
</reference>
<reference key="2">
    <citation type="journal article" date="2009" name="Appl. Environ. Microbiol.">
        <title>Rhizobium sp. strain NGR234 possesses a remarkable number of secretion systems.</title>
        <authorList>
            <person name="Schmeisser C."/>
            <person name="Liesegang H."/>
            <person name="Krysciak D."/>
            <person name="Bakkou N."/>
            <person name="Le Quere A."/>
            <person name="Wollherr A."/>
            <person name="Heinemeyer I."/>
            <person name="Morgenstern B."/>
            <person name="Pommerening-Roeser A."/>
            <person name="Flores M."/>
            <person name="Palacios R."/>
            <person name="Brenner S."/>
            <person name="Gottschalk G."/>
            <person name="Schmitz R.A."/>
            <person name="Broughton W.J."/>
            <person name="Perret X."/>
            <person name="Strittmatter A.W."/>
            <person name="Streit W.R."/>
        </authorList>
    </citation>
    <scope>NUCLEOTIDE SEQUENCE [LARGE SCALE GENOMIC DNA]</scope>
    <source>
        <strain>NBRC 101917 / NGR234</strain>
    </source>
</reference>
<protein>
    <recommendedName>
        <fullName>Uncharacterized protein y4nM</fullName>
    </recommendedName>
</protein>
<accession>P55585</accession>